<dbReference type="EC" id="5.3.1.6" evidence="1"/>
<dbReference type="EMBL" id="CP000114">
    <property type="protein sequence ID" value="ABA44767.1"/>
    <property type="molecule type" value="Genomic_DNA"/>
</dbReference>
<dbReference type="RefSeq" id="WP_000343880.1">
    <property type="nucleotide sequence ID" value="NC_007432.1"/>
</dbReference>
<dbReference type="SMR" id="Q3K0S0"/>
<dbReference type="KEGG" id="sak:SAK_1270"/>
<dbReference type="HOGENOM" id="CLU_056590_1_0_9"/>
<dbReference type="UniPathway" id="UPA00115">
    <property type="reaction ID" value="UER00412"/>
</dbReference>
<dbReference type="GO" id="GO:0004751">
    <property type="term" value="F:ribose-5-phosphate isomerase activity"/>
    <property type="evidence" value="ECO:0007669"/>
    <property type="project" value="UniProtKB-UniRule"/>
</dbReference>
<dbReference type="GO" id="GO:0009052">
    <property type="term" value="P:pentose-phosphate shunt, non-oxidative branch"/>
    <property type="evidence" value="ECO:0007669"/>
    <property type="project" value="UniProtKB-UniRule"/>
</dbReference>
<dbReference type="CDD" id="cd01398">
    <property type="entry name" value="RPI_A"/>
    <property type="match status" value="1"/>
</dbReference>
<dbReference type="FunFam" id="3.40.50.1360:FF:000001">
    <property type="entry name" value="Ribose-5-phosphate isomerase A"/>
    <property type="match status" value="1"/>
</dbReference>
<dbReference type="Gene3D" id="3.30.70.260">
    <property type="match status" value="1"/>
</dbReference>
<dbReference type="Gene3D" id="3.40.50.1360">
    <property type="match status" value="1"/>
</dbReference>
<dbReference type="HAMAP" id="MF_00170">
    <property type="entry name" value="Rib_5P_isom_A"/>
    <property type="match status" value="1"/>
</dbReference>
<dbReference type="InterPro" id="IPR037171">
    <property type="entry name" value="NagB/RpiA_transferase-like"/>
</dbReference>
<dbReference type="InterPro" id="IPR050262">
    <property type="entry name" value="Ribose-5P_isomerase"/>
</dbReference>
<dbReference type="InterPro" id="IPR020672">
    <property type="entry name" value="Ribose5P_isomerase_typA_subgr"/>
</dbReference>
<dbReference type="InterPro" id="IPR004788">
    <property type="entry name" value="Ribose5P_isomerase_type_A"/>
</dbReference>
<dbReference type="NCBIfam" id="NF001924">
    <property type="entry name" value="PRK00702.1"/>
    <property type="match status" value="1"/>
</dbReference>
<dbReference type="NCBIfam" id="TIGR00021">
    <property type="entry name" value="rpiA"/>
    <property type="match status" value="1"/>
</dbReference>
<dbReference type="PANTHER" id="PTHR43748">
    <property type="entry name" value="RIBOSE-5-PHOSPHATE ISOMERASE 3, CHLOROPLASTIC-RELATED"/>
    <property type="match status" value="1"/>
</dbReference>
<dbReference type="PANTHER" id="PTHR43748:SF3">
    <property type="entry name" value="RIBOSE-5-PHOSPHATE ISOMERASE 3, CHLOROPLASTIC-RELATED"/>
    <property type="match status" value="1"/>
</dbReference>
<dbReference type="Pfam" id="PF06026">
    <property type="entry name" value="Rib_5-P_isom_A"/>
    <property type="match status" value="1"/>
</dbReference>
<dbReference type="SUPFAM" id="SSF75445">
    <property type="entry name" value="D-ribose-5-phosphate isomerase (RpiA), lid domain"/>
    <property type="match status" value="1"/>
</dbReference>
<dbReference type="SUPFAM" id="SSF100950">
    <property type="entry name" value="NagB/RpiA/CoA transferase-like"/>
    <property type="match status" value="1"/>
</dbReference>
<sequence length="223" mass="24359">MDELKKLAGVTAAKYVKNGMIVGLGTGSTAYFFVEEIGRRVKEEGLQVVGVTTSNRTTEQARGLAIPLKSADDIDVIDVTVDGADEVDPDFNGIKGGGGALLMEKIVATPTKEYIWVVDESKLVETLGAFKLPVEVVRYGSERLFRVFKSKGYCPSFRETEGDRFITDMGNYIIDLDLKKIEDPKQLANELDHTVGVVEHGLFNGMVNKVIVAGKNGLDILEK</sequence>
<organism>
    <name type="scientific">Streptococcus agalactiae serotype Ia (strain ATCC 27591 / A909 / CDC SS700)</name>
    <dbReference type="NCBI Taxonomy" id="205921"/>
    <lineage>
        <taxon>Bacteria</taxon>
        <taxon>Bacillati</taxon>
        <taxon>Bacillota</taxon>
        <taxon>Bacilli</taxon>
        <taxon>Lactobacillales</taxon>
        <taxon>Streptococcaceae</taxon>
        <taxon>Streptococcus</taxon>
    </lineage>
</organism>
<gene>
    <name evidence="1" type="primary">rpiA</name>
    <name type="ordered locus">SAK_1270</name>
</gene>
<name>RPIA_STRA1</name>
<feature type="chain" id="PRO_1000017006" description="Ribose-5-phosphate isomerase A">
    <location>
        <begin position="1"/>
        <end position="223"/>
    </location>
</feature>
<feature type="active site" description="Proton acceptor" evidence="1">
    <location>
        <position position="104"/>
    </location>
</feature>
<feature type="binding site" evidence="1">
    <location>
        <begin position="26"/>
        <end position="29"/>
    </location>
    <ligand>
        <name>substrate</name>
    </ligand>
</feature>
<feature type="binding site" evidence="1">
    <location>
        <begin position="82"/>
        <end position="85"/>
    </location>
    <ligand>
        <name>substrate</name>
    </ligand>
</feature>
<feature type="binding site" evidence="1">
    <location>
        <begin position="95"/>
        <end position="98"/>
    </location>
    <ligand>
        <name>substrate</name>
    </ligand>
</feature>
<feature type="binding site" evidence="1">
    <location>
        <position position="122"/>
    </location>
    <ligand>
        <name>substrate</name>
    </ligand>
</feature>
<proteinExistence type="inferred from homology"/>
<keyword id="KW-0413">Isomerase</keyword>
<protein>
    <recommendedName>
        <fullName evidence="1">Ribose-5-phosphate isomerase A</fullName>
        <ecNumber evidence="1">5.3.1.6</ecNumber>
    </recommendedName>
    <alternativeName>
        <fullName evidence="1">Phosphoriboisomerase A</fullName>
        <shortName evidence="1">PRI</shortName>
    </alternativeName>
</protein>
<evidence type="ECO:0000255" key="1">
    <source>
        <dbReference type="HAMAP-Rule" id="MF_00170"/>
    </source>
</evidence>
<accession>Q3K0S0</accession>
<comment type="function">
    <text evidence="1">Catalyzes the reversible conversion of ribose-5-phosphate to ribulose 5-phosphate.</text>
</comment>
<comment type="catalytic activity">
    <reaction evidence="1">
        <text>aldehydo-D-ribose 5-phosphate = D-ribulose 5-phosphate</text>
        <dbReference type="Rhea" id="RHEA:14657"/>
        <dbReference type="ChEBI" id="CHEBI:58121"/>
        <dbReference type="ChEBI" id="CHEBI:58273"/>
        <dbReference type="EC" id="5.3.1.6"/>
    </reaction>
</comment>
<comment type="pathway">
    <text evidence="1">Carbohydrate degradation; pentose phosphate pathway; D-ribose 5-phosphate from D-ribulose 5-phosphate (non-oxidative stage): step 1/1.</text>
</comment>
<comment type="subunit">
    <text evidence="1">Homodimer.</text>
</comment>
<comment type="similarity">
    <text evidence="1">Belongs to the ribose 5-phosphate isomerase family.</text>
</comment>
<reference key="1">
    <citation type="journal article" date="2005" name="Proc. Natl. Acad. Sci. U.S.A.">
        <title>Genome analysis of multiple pathogenic isolates of Streptococcus agalactiae: implications for the microbial 'pan-genome'.</title>
        <authorList>
            <person name="Tettelin H."/>
            <person name="Masignani V."/>
            <person name="Cieslewicz M.J."/>
            <person name="Donati C."/>
            <person name="Medini D."/>
            <person name="Ward N.L."/>
            <person name="Angiuoli S.V."/>
            <person name="Crabtree J."/>
            <person name="Jones A.L."/>
            <person name="Durkin A.S."/>
            <person name="DeBoy R.T."/>
            <person name="Davidsen T.M."/>
            <person name="Mora M."/>
            <person name="Scarselli M."/>
            <person name="Margarit y Ros I."/>
            <person name="Peterson J.D."/>
            <person name="Hauser C.R."/>
            <person name="Sundaram J.P."/>
            <person name="Nelson W.C."/>
            <person name="Madupu R."/>
            <person name="Brinkac L.M."/>
            <person name="Dodson R.J."/>
            <person name="Rosovitz M.J."/>
            <person name="Sullivan S.A."/>
            <person name="Daugherty S.C."/>
            <person name="Haft D.H."/>
            <person name="Selengut J."/>
            <person name="Gwinn M.L."/>
            <person name="Zhou L."/>
            <person name="Zafar N."/>
            <person name="Khouri H."/>
            <person name="Radune D."/>
            <person name="Dimitrov G."/>
            <person name="Watkins K."/>
            <person name="O'Connor K.J."/>
            <person name="Smith S."/>
            <person name="Utterback T.R."/>
            <person name="White O."/>
            <person name="Rubens C.E."/>
            <person name="Grandi G."/>
            <person name="Madoff L.C."/>
            <person name="Kasper D.L."/>
            <person name="Telford J.L."/>
            <person name="Wessels M.R."/>
            <person name="Rappuoli R."/>
            <person name="Fraser C.M."/>
        </authorList>
    </citation>
    <scope>NUCLEOTIDE SEQUENCE [LARGE SCALE GENOMIC DNA]</scope>
    <source>
        <strain>ATCC 27591 / A909 / CDC SS700</strain>
    </source>
</reference>